<sequence length="894" mass="102267">MKMSEQLSDRYNPADVESRTYEWWEKNGYFKAQDQSTKPPFSIILPPPNVTGFLHMGHALDHTIQDMMIRWKRMNGYNTMWLPGTDHAGIATQSVVERELKKDGVTRHDLGREKFVEKVWDWKHQYGNRIYGQMRRLGDSCDWDRAVFTLDEGVSKAVRKVFVSLHKKGLIYRGQRLVNWSGPLETAISDLEVEHKQIKGSLYHVKYPLEDGSGFLVVATTRPETMLGDSAVCVHPEDERYKHLIGKNVLLPLTNRKIKIIADTYVDKEFGSGVVKITPAHDFNDYKIGKTHNLEFINILTKKAEINENGGVYAGLKVQEARKRILEDLKAQDLLEKEEPHVHSVGHCSRSGAVVEPYLSEQWFVKMEALAVPAKRVAENGTIRFEPESWTKVYLHWLNNIEDWCISRQLWWGHRIPVWYCEDCNHQTVAETDVTACEKCGSTKLHQDDDVLDTWFSSALWPFSTMGWPNETETLKTFYPTSYLVTGHDIIFFWVARMIMMGLEFQRDVPFRTVYIHGLVRDSQGRKMSKSLGNSIDPVEMIEKHGADALRFTFAAHLYSGKDFKFSEQRLEGYRNFMNKVWNAARFALSNLSDFKAPTEGVKALPNKVHISVFDQWIITKLEEVTKTVEEAMEQERFSDASTALYQFIWNQFCDWYIEFTKPILNGNNAEEKAATQLVIAQVLNRIMRLLHPFAPFISEEIYQKLPIKGTACIVDQYPNARNDKEFLSLGSAQAALEIDIVKEVITAIRNIRGENRISPAVKLNVRLGVTNDQTQKILGNNRTALMTMGRLENMEIGPEGDMMKCAVAPVVVKDASVKVIIPLEGLVDFDEEVKRINKSIEKLTRDIGMLSGKLSNEKFVANADEEVVAADRALLAQSKVQLDSLRDALTRFQ</sequence>
<accession>Q6MQK8</accession>
<evidence type="ECO:0000255" key="1">
    <source>
        <dbReference type="HAMAP-Rule" id="MF_02004"/>
    </source>
</evidence>
<keyword id="KW-0030">Aminoacyl-tRNA synthetase</keyword>
<keyword id="KW-0067">ATP-binding</keyword>
<keyword id="KW-0175">Coiled coil</keyword>
<keyword id="KW-0963">Cytoplasm</keyword>
<keyword id="KW-0436">Ligase</keyword>
<keyword id="KW-0547">Nucleotide-binding</keyword>
<keyword id="KW-0648">Protein biosynthesis</keyword>
<keyword id="KW-1185">Reference proteome</keyword>
<organism>
    <name type="scientific">Bdellovibrio bacteriovorus (strain ATCC 15356 / DSM 50701 / NCIMB 9529 / HD100)</name>
    <dbReference type="NCBI Taxonomy" id="264462"/>
    <lineage>
        <taxon>Bacteria</taxon>
        <taxon>Pseudomonadati</taxon>
        <taxon>Bdellovibrionota</taxon>
        <taxon>Bdellovibrionia</taxon>
        <taxon>Bdellovibrionales</taxon>
        <taxon>Pseudobdellovibrionaceae</taxon>
        <taxon>Bdellovibrio</taxon>
    </lineage>
</organism>
<protein>
    <recommendedName>
        <fullName evidence="1">Valine--tRNA ligase</fullName>
        <ecNumber evidence="1">6.1.1.9</ecNumber>
    </recommendedName>
    <alternativeName>
        <fullName evidence="1">Valyl-tRNA synthetase</fullName>
        <shortName evidence="1">ValRS</shortName>
    </alternativeName>
</protein>
<name>SYV_BDEBA</name>
<gene>
    <name evidence="1" type="primary">valS</name>
    <name type="ordered locus">Bd0458</name>
</gene>
<proteinExistence type="inferred from homology"/>
<comment type="function">
    <text evidence="1">Catalyzes the attachment of valine to tRNA(Val). As ValRS can inadvertently accommodate and process structurally similar amino acids such as threonine, to avoid such errors, it has a 'posttransfer' editing activity that hydrolyzes mischarged Thr-tRNA(Val) in a tRNA-dependent manner.</text>
</comment>
<comment type="catalytic activity">
    <reaction evidence="1">
        <text>tRNA(Val) + L-valine + ATP = L-valyl-tRNA(Val) + AMP + diphosphate</text>
        <dbReference type="Rhea" id="RHEA:10704"/>
        <dbReference type="Rhea" id="RHEA-COMP:9672"/>
        <dbReference type="Rhea" id="RHEA-COMP:9708"/>
        <dbReference type="ChEBI" id="CHEBI:30616"/>
        <dbReference type="ChEBI" id="CHEBI:33019"/>
        <dbReference type="ChEBI" id="CHEBI:57762"/>
        <dbReference type="ChEBI" id="CHEBI:78442"/>
        <dbReference type="ChEBI" id="CHEBI:78537"/>
        <dbReference type="ChEBI" id="CHEBI:456215"/>
        <dbReference type="EC" id="6.1.1.9"/>
    </reaction>
</comment>
<comment type="subunit">
    <text evidence="1">Monomer.</text>
</comment>
<comment type="subcellular location">
    <subcellularLocation>
        <location evidence="1">Cytoplasm</location>
    </subcellularLocation>
</comment>
<comment type="domain">
    <text evidence="1">ValRS has two distinct active sites: one for aminoacylation and one for editing. The misactivated threonine is translocated from the active site to the editing site.</text>
</comment>
<comment type="domain">
    <text evidence="1">The C-terminal coiled-coil domain is crucial for aminoacylation activity.</text>
</comment>
<comment type="similarity">
    <text evidence="1">Belongs to the class-I aminoacyl-tRNA synthetase family. ValS type 1 subfamily.</text>
</comment>
<feature type="chain" id="PRO_0000224442" description="Valine--tRNA ligase">
    <location>
        <begin position="1"/>
        <end position="894"/>
    </location>
</feature>
<feature type="coiled-coil region" evidence="1">
    <location>
        <begin position="827"/>
        <end position="852"/>
    </location>
</feature>
<feature type="short sequence motif" description="'HIGH' region">
    <location>
        <begin position="48"/>
        <end position="58"/>
    </location>
</feature>
<feature type="short sequence motif" description="'KMSKS' region">
    <location>
        <begin position="527"/>
        <end position="531"/>
    </location>
</feature>
<feature type="binding site" evidence="1">
    <location>
        <position position="530"/>
    </location>
    <ligand>
        <name>ATP</name>
        <dbReference type="ChEBI" id="CHEBI:30616"/>
    </ligand>
</feature>
<dbReference type="EC" id="6.1.1.9" evidence="1"/>
<dbReference type="EMBL" id="BX842647">
    <property type="protein sequence ID" value="CAE78439.1"/>
    <property type="molecule type" value="Genomic_DNA"/>
</dbReference>
<dbReference type="SMR" id="Q6MQK8"/>
<dbReference type="STRING" id="264462.Bd0458"/>
<dbReference type="KEGG" id="bba:Bd0458"/>
<dbReference type="eggNOG" id="COG0525">
    <property type="taxonomic scope" value="Bacteria"/>
</dbReference>
<dbReference type="HOGENOM" id="CLU_001493_0_2_7"/>
<dbReference type="Proteomes" id="UP000008080">
    <property type="component" value="Chromosome"/>
</dbReference>
<dbReference type="GO" id="GO:0005829">
    <property type="term" value="C:cytosol"/>
    <property type="evidence" value="ECO:0007669"/>
    <property type="project" value="TreeGrafter"/>
</dbReference>
<dbReference type="GO" id="GO:0002161">
    <property type="term" value="F:aminoacyl-tRNA deacylase activity"/>
    <property type="evidence" value="ECO:0007669"/>
    <property type="project" value="InterPro"/>
</dbReference>
<dbReference type="GO" id="GO:0005524">
    <property type="term" value="F:ATP binding"/>
    <property type="evidence" value="ECO:0007669"/>
    <property type="project" value="UniProtKB-UniRule"/>
</dbReference>
<dbReference type="GO" id="GO:0004832">
    <property type="term" value="F:valine-tRNA ligase activity"/>
    <property type="evidence" value="ECO:0007669"/>
    <property type="project" value="UniProtKB-UniRule"/>
</dbReference>
<dbReference type="GO" id="GO:0006438">
    <property type="term" value="P:valyl-tRNA aminoacylation"/>
    <property type="evidence" value="ECO:0007669"/>
    <property type="project" value="UniProtKB-UniRule"/>
</dbReference>
<dbReference type="CDD" id="cd07962">
    <property type="entry name" value="Anticodon_Ia_Val"/>
    <property type="match status" value="1"/>
</dbReference>
<dbReference type="CDD" id="cd00817">
    <property type="entry name" value="ValRS_core"/>
    <property type="match status" value="1"/>
</dbReference>
<dbReference type="FunFam" id="1.10.287.380:FF:000001">
    <property type="entry name" value="Valine--tRNA ligase"/>
    <property type="match status" value="1"/>
</dbReference>
<dbReference type="FunFam" id="1.10.730.10:FF:000014">
    <property type="entry name" value="Valine--tRNA ligase"/>
    <property type="match status" value="1"/>
</dbReference>
<dbReference type="FunFam" id="3.40.50.620:FF:000032">
    <property type="entry name" value="Valine--tRNA ligase"/>
    <property type="match status" value="1"/>
</dbReference>
<dbReference type="FunFam" id="3.40.50.620:FF:000098">
    <property type="entry name" value="Valine--tRNA ligase"/>
    <property type="match status" value="1"/>
</dbReference>
<dbReference type="FunFam" id="3.90.740.10:FF:000010">
    <property type="entry name" value="Valine--tRNA ligase"/>
    <property type="match status" value="1"/>
</dbReference>
<dbReference type="FunFam" id="3.90.740.10:FF:000008">
    <property type="entry name" value="Valine--tRNA ligase, mitochondrial"/>
    <property type="match status" value="1"/>
</dbReference>
<dbReference type="Gene3D" id="2.170.220.10">
    <property type="match status" value="1"/>
</dbReference>
<dbReference type="Gene3D" id="3.40.50.620">
    <property type="entry name" value="HUPs"/>
    <property type="match status" value="2"/>
</dbReference>
<dbReference type="Gene3D" id="1.10.730.10">
    <property type="entry name" value="Isoleucyl-tRNA Synthetase, Domain 1"/>
    <property type="match status" value="1"/>
</dbReference>
<dbReference type="Gene3D" id="1.10.287.380">
    <property type="entry name" value="Valyl-tRNA synthetase, C-terminal domain"/>
    <property type="match status" value="1"/>
</dbReference>
<dbReference type="Gene3D" id="3.90.740.10">
    <property type="entry name" value="Valyl/Leucyl/Isoleucyl-tRNA synthetase, editing domain"/>
    <property type="match status" value="1"/>
</dbReference>
<dbReference type="HAMAP" id="MF_02004">
    <property type="entry name" value="Val_tRNA_synth_type1"/>
    <property type="match status" value="1"/>
</dbReference>
<dbReference type="InterPro" id="IPR001412">
    <property type="entry name" value="aa-tRNA-synth_I_CS"/>
</dbReference>
<dbReference type="InterPro" id="IPR002300">
    <property type="entry name" value="aa-tRNA-synth_Ia"/>
</dbReference>
<dbReference type="InterPro" id="IPR033705">
    <property type="entry name" value="Anticodon_Ia_Val"/>
</dbReference>
<dbReference type="InterPro" id="IPR013155">
    <property type="entry name" value="M/V/L/I-tRNA-synth_anticd-bd"/>
</dbReference>
<dbReference type="InterPro" id="IPR014729">
    <property type="entry name" value="Rossmann-like_a/b/a_fold"/>
</dbReference>
<dbReference type="InterPro" id="IPR010978">
    <property type="entry name" value="tRNA-bd_arm"/>
</dbReference>
<dbReference type="InterPro" id="IPR009080">
    <property type="entry name" value="tRNAsynth_Ia_anticodon-bd"/>
</dbReference>
<dbReference type="InterPro" id="IPR037118">
    <property type="entry name" value="Val-tRNA_synth_C_sf"/>
</dbReference>
<dbReference type="InterPro" id="IPR019499">
    <property type="entry name" value="Val-tRNA_synth_tRNA-bd"/>
</dbReference>
<dbReference type="InterPro" id="IPR009008">
    <property type="entry name" value="Val/Leu/Ile-tRNA-synth_edit"/>
</dbReference>
<dbReference type="InterPro" id="IPR002303">
    <property type="entry name" value="Valyl-tRNA_ligase"/>
</dbReference>
<dbReference type="NCBIfam" id="NF004349">
    <property type="entry name" value="PRK05729.1"/>
    <property type="match status" value="1"/>
</dbReference>
<dbReference type="NCBIfam" id="TIGR00422">
    <property type="entry name" value="valS"/>
    <property type="match status" value="1"/>
</dbReference>
<dbReference type="PANTHER" id="PTHR11946:SF93">
    <property type="entry name" value="VALINE--TRNA LIGASE, CHLOROPLASTIC_MITOCHONDRIAL 2"/>
    <property type="match status" value="1"/>
</dbReference>
<dbReference type="PANTHER" id="PTHR11946">
    <property type="entry name" value="VALYL-TRNA SYNTHETASES"/>
    <property type="match status" value="1"/>
</dbReference>
<dbReference type="Pfam" id="PF08264">
    <property type="entry name" value="Anticodon_1"/>
    <property type="match status" value="1"/>
</dbReference>
<dbReference type="Pfam" id="PF00133">
    <property type="entry name" value="tRNA-synt_1"/>
    <property type="match status" value="1"/>
</dbReference>
<dbReference type="Pfam" id="PF10458">
    <property type="entry name" value="Val_tRNA-synt_C"/>
    <property type="match status" value="1"/>
</dbReference>
<dbReference type="PRINTS" id="PR00986">
    <property type="entry name" value="TRNASYNTHVAL"/>
</dbReference>
<dbReference type="SUPFAM" id="SSF47323">
    <property type="entry name" value="Anticodon-binding domain of a subclass of class I aminoacyl-tRNA synthetases"/>
    <property type="match status" value="1"/>
</dbReference>
<dbReference type="SUPFAM" id="SSF52374">
    <property type="entry name" value="Nucleotidylyl transferase"/>
    <property type="match status" value="1"/>
</dbReference>
<dbReference type="SUPFAM" id="SSF46589">
    <property type="entry name" value="tRNA-binding arm"/>
    <property type="match status" value="1"/>
</dbReference>
<dbReference type="SUPFAM" id="SSF50677">
    <property type="entry name" value="ValRS/IleRS/LeuRS editing domain"/>
    <property type="match status" value="1"/>
</dbReference>
<dbReference type="PROSITE" id="PS00178">
    <property type="entry name" value="AA_TRNA_LIGASE_I"/>
    <property type="match status" value="1"/>
</dbReference>
<reference key="1">
    <citation type="journal article" date="2004" name="Science">
        <title>A predator unmasked: life cycle of Bdellovibrio bacteriovorus from a genomic perspective.</title>
        <authorList>
            <person name="Rendulic S."/>
            <person name="Jagtap P."/>
            <person name="Rosinus A."/>
            <person name="Eppinger M."/>
            <person name="Baar C."/>
            <person name="Lanz C."/>
            <person name="Keller H."/>
            <person name="Lambert C."/>
            <person name="Evans K.J."/>
            <person name="Goesmann A."/>
            <person name="Meyer F."/>
            <person name="Sockett R.E."/>
            <person name="Schuster S.C."/>
        </authorList>
    </citation>
    <scope>NUCLEOTIDE SEQUENCE [LARGE SCALE GENOMIC DNA]</scope>
    <source>
        <strain>ATCC 15356 / DSM 50701 / NCIMB 9529 / HD100</strain>
    </source>
</reference>